<proteinExistence type="inferred from homology"/>
<evidence type="ECO:0000255" key="1">
    <source>
        <dbReference type="HAMAP-Rule" id="MF_00378"/>
    </source>
</evidence>
<organism>
    <name type="scientific">Brucella suis (strain ATCC 23445 / NCTC 10510)</name>
    <dbReference type="NCBI Taxonomy" id="470137"/>
    <lineage>
        <taxon>Bacteria</taxon>
        <taxon>Pseudomonadati</taxon>
        <taxon>Pseudomonadota</taxon>
        <taxon>Alphaproteobacteria</taxon>
        <taxon>Hyphomicrobiales</taxon>
        <taxon>Brucellaceae</taxon>
        <taxon>Brucella/Ochrobactrum group</taxon>
        <taxon>Brucella</taxon>
    </lineage>
</organism>
<keyword id="KW-0963">Cytoplasm</keyword>
<keyword id="KW-0269">Exonuclease</keyword>
<keyword id="KW-0378">Hydrolase</keyword>
<keyword id="KW-0540">Nuclease</keyword>
<feature type="chain" id="PRO_1000079976" description="Exodeoxyribonuclease 7 large subunit">
    <location>
        <begin position="1"/>
        <end position="511"/>
    </location>
</feature>
<accession>A9WZ60</accession>
<gene>
    <name evidence="1" type="primary">xseA</name>
    <name type="ordered locus">BSUIS_B0756</name>
</gene>
<protein>
    <recommendedName>
        <fullName evidence="1">Exodeoxyribonuclease 7 large subunit</fullName>
        <ecNumber evidence="1">3.1.11.6</ecNumber>
    </recommendedName>
    <alternativeName>
        <fullName evidence="1">Exodeoxyribonuclease VII large subunit</fullName>
        <shortName evidence="1">Exonuclease VII large subunit</shortName>
    </alternativeName>
</protein>
<dbReference type="EC" id="3.1.11.6" evidence="1"/>
<dbReference type="EMBL" id="CP000912">
    <property type="protein sequence ID" value="ABY39726.1"/>
    <property type="molecule type" value="Genomic_DNA"/>
</dbReference>
<dbReference type="SMR" id="A9WZ60"/>
<dbReference type="KEGG" id="bmt:BSUIS_B0756"/>
<dbReference type="HOGENOM" id="CLU_023625_3_1_5"/>
<dbReference type="PRO" id="PR:A9WZ60"/>
<dbReference type="Proteomes" id="UP000008545">
    <property type="component" value="Chromosome II"/>
</dbReference>
<dbReference type="GO" id="GO:0005737">
    <property type="term" value="C:cytoplasm"/>
    <property type="evidence" value="ECO:0007669"/>
    <property type="project" value="UniProtKB-SubCell"/>
</dbReference>
<dbReference type="GO" id="GO:0009318">
    <property type="term" value="C:exodeoxyribonuclease VII complex"/>
    <property type="evidence" value="ECO:0007669"/>
    <property type="project" value="InterPro"/>
</dbReference>
<dbReference type="GO" id="GO:0008855">
    <property type="term" value="F:exodeoxyribonuclease VII activity"/>
    <property type="evidence" value="ECO:0007669"/>
    <property type="project" value="UniProtKB-UniRule"/>
</dbReference>
<dbReference type="GO" id="GO:0003676">
    <property type="term" value="F:nucleic acid binding"/>
    <property type="evidence" value="ECO:0007669"/>
    <property type="project" value="InterPro"/>
</dbReference>
<dbReference type="GO" id="GO:0006308">
    <property type="term" value="P:DNA catabolic process"/>
    <property type="evidence" value="ECO:0007669"/>
    <property type="project" value="UniProtKB-UniRule"/>
</dbReference>
<dbReference type="CDD" id="cd04489">
    <property type="entry name" value="ExoVII_LU_OBF"/>
    <property type="match status" value="1"/>
</dbReference>
<dbReference type="HAMAP" id="MF_00378">
    <property type="entry name" value="Exonuc_7_L"/>
    <property type="match status" value="1"/>
</dbReference>
<dbReference type="InterPro" id="IPR003753">
    <property type="entry name" value="Exonuc_VII_L"/>
</dbReference>
<dbReference type="InterPro" id="IPR020579">
    <property type="entry name" value="Exonuc_VII_lsu_C"/>
</dbReference>
<dbReference type="InterPro" id="IPR025824">
    <property type="entry name" value="OB-fold_nuc-bd_dom"/>
</dbReference>
<dbReference type="NCBIfam" id="TIGR00237">
    <property type="entry name" value="xseA"/>
    <property type="match status" value="1"/>
</dbReference>
<dbReference type="PANTHER" id="PTHR30008">
    <property type="entry name" value="EXODEOXYRIBONUCLEASE 7 LARGE SUBUNIT"/>
    <property type="match status" value="1"/>
</dbReference>
<dbReference type="PANTHER" id="PTHR30008:SF0">
    <property type="entry name" value="EXODEOXYRIBONUCLEASE 7 LARGE SUBUNIT"/>
    <property type="match status" value="1"/>
</dbReference>
<dbReference type="Pfam" id="PF02601">
    <property type="entry name" value="Exonuc_VII_L"/>
    <property type="match status" value="2"/>
</dbReference>
<dbReference type="Pfam" id="PF13742">
    <property type="entry name" value="tRNA_anti_2"/>
    <property type="match status" value="1"/>
</dbReference>
<comment type="function">
    <text evidence="1">Bidirectionally degrades single-stranded DNA into large acid-insoluble oligonucleotides, which are then degraded further into small acid-soluble oligonucleotides.</text>
</comment>
<comment type="catalytic activity">
    <reaction evidence="1">
        <text>Exonucleolytic cleavage in either 5'- to 3'- or 3'- to 5'-direction to yield nucleoside 5'-phosphates.</text>
        <dbReference type="EC" id="3.1.11.6"/>
    </reaction>
</comment>
<comment type="subunit">
    <text evidence="1">Heterooligomer composed of large and small subunits.</text>
</comment>
<comment type="subcellular location">
    <subcellularLocation>
        <location evidence="1">Cytoplasm</location>
    </subcellularLocation>
</comment>
<comment type="similarity">
    <text evidence="1">Belongs to the XseA family.</text>
</comment>
<name>EX7L_BRUSI</name>
<reference key="1">
    <citation type="submission" date="2007-12" db="EMBL/GenBank/DDBJ databases">
        <title>Brucella suis ATCC 23445 whole genome shotgun sequencing project.</title>
        <authorList>
            <person name="Setubal J.C."/>
            <person name="Bowns C."/>
            <person name="Boyle S."/>
            <person name="Crasta O.R."/>
            <person name="Czar M.J."/>
            <person name="Dharmanolla C."/>
            <person name="Gillespie J.J."/>
            <person name="Kenyon R.W."/>
            <person name="Lu J."/>
            <person name="Mane S."/>
            <person name="Mohapatra S."/>
            <person name="Nagrani S."/>
            <person name="Purkayastha A."/>
            <person name="Rajasimha H.K."/>
            <person name="Shallom J.M."/>
            <person name="Shallom S."/>
            <person name="Shukla M."/>
            <person name="Snyder E.E."/>
            <person name="Sobral B.W."/>
            <person name="Wattam A.R."/>
            <person name="Will R."/>
            <person name="Williams K."/>
            <person name="Yoo H."/>
            <person name="Bruce D."/>
            <person name="Detter C."/>
            <person name="Munk C."/>
            <person name="Brettin T.S."/>
        </authorList>
    </citation>
    <scope>NUCLEOTIDE SEQUENCE [LARGE SCALE GENOMIC DNA]</scope>
    <source>
        <strain>ATCC 23445 / NCTC 10510</strain>
    </source>
</reference>
<sequence length="511" mass="56349">MASDSSFPGASSNVAEYSVSEISGALKRTVEDTFGHVRVRGEISGYRGPHSSGHAYFALKDDRARLEAVIWRGSMSRLRFRPEEGMEVIATGKLTTYPGSSKYQIVIEQMEPAGAGALMALLEERKQRLAAEGLFDPALKQLLPFMPRVIGVVTSPTGAVIRDIIHRISDRYPLRVIVWPVRVQGDTCGPEVATAVNGFNTLPDDGPILRPDVLIVARGGGSLEDLWGFNDEIVVRAVAASHIPVISAVGHETDWTLIDLAADMRAPTPTGAAEMAVPVKADLQASLASQSARLSSAMSRFFDQKRQAHRAAARAMPSADQLLALPRRRFDEAASRLTRALFVNTQKKRVHFDGHARQLSPRLLQRRLVELERGVTMLGQRLPRALEAFLRERRTAFTHRANRLSPEPILRRTRLTGSTLEQLDRRRDQAVRLLIERVKRRSQELDRLMRTLSYESVLERGFAVVFDAQGKPVKQAAAVSPGDALSVRFRDGDVGVVARAGLTIPDPTKGQ</sequence>